<comment type="function">
    <text evidence="1">Confers resistance to fosfomycin and deoxycholate.</text>
</comment>
<comment type="subcellular location">
    <subcellularLocation>
        <location evidence="1">Cell inner membrane</location>
        <topology evidence="1">Multi-pass membrane protein</topology>
    </subcellularLocation>
</comment>
<comment type="similarity">
    <text evidence="1">Belongs to the major facilitator superfamily. DHA1 family. MdtG (TC 2.A.1.2.20) subfamily.</text>
</comment>
<reference key="1">
    <citation type="journal article" date="2009" name="PLoS Genet.">
        <title>Organised genome dynamics in the Escherichia coli species results in highly diverse adaptive paths.</title>
        <authorList>
            <person name="Touchon M."/>
            <person name="Hoede C."/>
            <person name="Tenaillon O."/>
            <person name="Barbe V."/>
            <person name="Baeriswyl S."/>
            <person name="Bidet P."/>
            <person name="Bingen E."/>
            <person name="Bonacorsi S."/>
            <person name="Bouchier C."/>
            <person name="Bouvet O."/>
            <person name="Calteau A."/>
            <person name="Chiapello H."/>
            <person name="Clermont O."/>
            <person name="Cruveiller S."/>
            <person name="Danchin A."/>
            <person name="Diard M."/>
            <person name="Dossat C."/>
            <person name="Karoui M.E."/>
            <person name="Frapy E."/>
            <person name="Garry L."/>
            <person name="Ghigo J.M."/>
            <person name="Gilles A.M."/>
            <person name="Johnson J."/>
            <person name="Le Bouguenec C."/>
            <person name="Lescat M."/>
            <person name="Mangenot S."/>
            <person name="Martinez-Jehanne V."/>
            <person name="Matic I."/>
            <person name="Nassif X."/>
            <person name="Oztas S."/>
            <person name="Petit M.A."/>
            <person name="Pichon C."/>
            <person name="Rouy Z."/>
            <person name="Ruf C.S."/>
            <person name="Schneider D."/>
            <person name="Tourret J."/>
            <person name="Vacherie B."/>
            <person name="Vallenet D."/>
            <person name="Medigue C."/>
            <person name="Rocha E.P.C."/>
            <person name="Denamur E."/>
        </authorList>
    </citation>
    <scope>NUCLEOTIDE SEQUENCE [LARGE SCALE GENOMIC DNA]</scope>
    <source>
        <strain>S88 / ExPEC</strain>
    </source>
</reference>
<accession>B7MIJ4</accession>
<proteinExistence type="inferred from homology"/>
<sequence length="408" mass="43881">MSPCENDTPINWKRNLIVAWLGCFLTGAAFSLVMPFLPLYVEQLGVTGHSALNMWSGIVFSITFLFSAIASPFWGGLADRKGRKLMLLRSALGMGIVMVLMGLAQNIWQFLILRALLGLLGGFVPNANALIATQVPRNKSGWALGTLSTGGVSGALLGPMAGGLLADSYGLRPVFFITASVLILCFFVTLFCIREKFQPVSKKEMLHMREVVTSLKNPKLVLSLFVTTLIIQVATGSIAPILTLYVRELAGNVSNVAFISGMIASVPGVAALLSAPRLGKLGDRIGPEKILITALIFSVLLLIPMSYVQTPLQLGILRFLLGAADGALLPAVQTLLVYNSSNQIAGRIFSYNQSFRDIGNVTGPLMGAAISANYGFRAVFLVTAGVVLFNAVYSWNSLRRRRIPQISN</sequence>
<evidence type="ECO:0000255" key="1">
    <source>
        <dbReference type="HAMAP-Rule" id="MF_01528"/>
    </source>
</evidence>
<gene>
    <name evidence="1" type="primary">mdtG</name>
    <name type="ordered locus">ECS88_1067</name>
</gene>
<dbReference type="EMBL" id="CU928161">
    <property type="protein sequence ID" value="CAR02394.1"/>
    <property type="molecule type" value="Genomic_DNA"/>
</dbReference>
<dbReference type="RefSeq" id="WP_000074171.1">
    <property type="nucleotide sequence ID" value="NC_011742.1"/>
</dbReference>
<dbReference type="SMR" id="B7MIJ4"/>
<dbReference type="KEGG" id="ecz:ECS88_1067"/>
<dbReference type="HOGENOM" id="CLU_001265_57_3_6"/>
<dbReference type="Proteomes" id="UP000000747">
    <property type="component" value="Chromosome"/>
</dbReference>
<dbReference type="GO" id="GO:0005886">
    <property type="term" value="C:plasma membrane"/>
    <property type="evidence" value="ECO:0007669"/>
    <property type="project" value="UniProtKB-SubCell"/>
</dbReference>
<dbReference type="GO" id="GO:0022857">
    <property type="term" value="F:transmembrane transporter activity"/>
    <property type="evidence" value="ECO:0007669"/>
    <property type="project" value="UniProtKB-UniRule"/>
</dbReference>
<dbReference type="GO" id="GO:0046677">
    <property type="term" value="P:response to antibiotic"/>
    <property type="evidence" value="ECO:0007669"/>
    <property type="project" value="UniProtKB-KW"/>
</dbReference>
<dbReference type="CDD" id="cd17391">
    <property type="entry name" value="MFS_MdtG_MDR_like"/>
    <property type="match status" value="1"/>
</dbReference>
<dbReference type="FunFam" id="1.20.1250.20:FF:000020">
    <property type="entry name" value="Multidrug resistance protein MdtG"/>
    <property type="match status" value="1"/>
</dbReference>
<dbReference type="FunFam" id="1.20.1250.20:FF:000022">
    <property type="entry name" value="Multidrug resistance protein MdtG"/>
    <property type="match status" value="1"/>
</dbReference>
<dbReference type="Gene3D" id="1.20.1250.20">
    <property type="entry name" value="MFS general substrate transporter like domains"/>
    <property type="match status" value="2"/>
</dbReference>
<dbReference type="HAMAP" id="MF_01528">
    <property type="entry name" value="MFS_MdtG"/>
    <property type="match status" value="1"/>
</dbReference>
<dbReference type="InterPro" id="IPR011701">
    <property type="entry name" value="MFS"/>
</dbReference>
<dbReference type="InterPro" id="IPR020846">
    <property type="entry name" value="MFS_dom"/>
</dbReference>
<dbReference type="InterPro" id="IPR050497">
    <property type="entry name" value="MFS_MdtG_subfamily"/>
</dbReference>
<dbReference type="InterPro" id="IPR036259">
    <property type="entry name" value="MFS_trans_sf"/>
</dbReference>
<dbReference type="InterPro" id="IPR023692">
    <property type="entry name" value="Mutidrug-R_MdtG"/>
</dbReference>
<dbReference type="InterPro" id="IPR001958">
    <property type="entry name" value="Tet-R_TetA/multi-R_MdtG-like"/>
</dbReference>
<dbReference type="NCBIfam" id="NF007372">
    <property type="entry name" value="PRK09874.1"/>
    <property type="match status" value="1"/>
</dbReference>
<dbReference type="PANTHER" id="PTHR43414">
    <property type="entry name" value="MULTIDRUG RESISTANCE PROTEIN MDTG"/>
    <property type="match status" value="1"/>
</dbReference>
<dbReference type="PANTHER" id="PTHR43414:SF6">
    <property type="entry name" value="MULTIDRUG RESISTANCE PROTEIN MDTG"/>
    <property type="match status" value="1"/>
</dbReference>
<dbReference type="Pfam" id="PF07690">
    <property type="entry name" value="MFS_1"/>
    <property type="match status" value="1"/>
</dbReference>
<dbReference type="PRINTS" id="PR01035">
    <property type="entry name" value="TCRTETA"/>
</dbReference>
<dbReference type="SUPFAM" id="SSF103473">
    <property type="entry name" value="MFS general substrate transporter"/>
    <property type="match status" value="1"/>
</dbReference>
<dbReference type="PROSITE" id="PS50850">
    <property type="entry name" value="MFS"/>
    <property type="match status" value="1"/>
</dbReference>
<protein>
    <recommendedName>
        <fullName evidence="1">Multidrug resistance protein MdtG</fullName>
    </recommendedName>
</protein>
<name>MDTG_ECO45</name>
<keyword id="KW-0046">Antibiotic resistance</keyword>
<keyword id="KW-0997">Cell inner membrane</keyword>
<keyword id="KW-1003">Cell membrane</keyword>
<keyword id="KW-0472">Membrane</keyword>
<keyword id="KW-1185">Reference proteome</keyword>
<keyword id="KW-0812">Transmembrane</keyword>
<keyword id="KW-1133">Transmembrane helix</keyword>
<keyword id="KW-0813">Transport</keyword>
<feature type="chain" id="PRO_1000200783" description="Multidrug resistance protein MdtG">
    <location>
        <begin position="1"/>
        <end position="408"/>
    </location>
</feature>
<feature type="transmembrane region" description="Helical" evidence="1">
    <location>
        <begin position="16"/>
        <end position="36"/>
    </location>
</feature>
<feature type="transmembrane region" description="Helical" evidence="1">
    <location>
        <begin position="58"/>
        <end position="78"/>
    </location>
</feature>
<feature type="transmembrane region" description="Helical" evidence="1">
    <location>
        <begin position="92"/>
        <end position="112"/>
    </location>
</feature>
<feature type="transmembrane region" description="Helical" evidence="1">
    <location>
        <begin position="115"/>
        <end position="135"/>
    </location>
</feature>
<feature type="transmembrane region" description="Helical" evidence="1">
    <location>
        <begin position="146"/>
        <end position="166"/>
    </location>
</feature>
<feature type="transmembrane region" description="Helical" evidence="1">
    <location>
        <begin position="173"/>
        <end position="193"/>
    </location>
</feature>
<feature type="transmembrane region" description="Helical" evidence="1">
    <location>
        <begin position="224"/>
        <end position="244"/>
    </location>
</feature>
<feature type="transmembrane region" description="Helical" evidence="1">
    <location>
        <begin position="256"/>
        <end position="276"/>
    </location>
</feature>
<feature type="transmembrane region" description="Helical" evidence="1">
    <location>
        <begin position="290"/>
        <end position="310"/>
    </location>
</feature>
<feature type="transmembrane region" description="Helical" evidence="1">
    <location>
        <begin position="319"/>
        <end position="339"/>
    </location>
</feature>
<feature type="transmembrane region" description="Helical" evidence="1">
    <location>
        <begin position="378"/>
        <end position="398"/>
    </location>
</feature>
<organism>
    <name type="scientific">Escherichia coli O45:K1 (strain S88 / ExPEC)</name>
    <dbReference type="NCBI Taxonomy" id="585035"/>
    <lineage>
        <taxon>Bacteria</taxon>
        <taxon>Pseudomonadati</taxon>
        <taxon>Pseudomonadota</taxon>
        <taxon>Gammaproteobacteria</taxon>
        <taxon>Enterobacterales</taxon>
        <taxon>Enterobacteriaceae</taxon>
        <taxon>Escherichia</taxon>
    </lineage>
</organism>